<dbReference type="EC" id="6.1.1.14" evidence="1"/>
<dbReference type="EMBL" id="CP000408">
    <property type="protein sequence ID" value="ABP92933.1"/>
    <property type="molecule type" value="Genomic_DNA"/>
</dbReference>
<dbReference type="SMR" id="A4W3J4"/>
<dbReference type="KEGG" id="ssv:SSU98_1775"/>
<dbReference type="HOGENOM" id="CLU_007220_2_2_9"/>
<dbReference type="GO" id="GO:0005829">
    <property type="term" value="C:cytosol"/>
    <property type="evidence" value="ECO:0007669"/>
    <property type="project" value="TreeGrafter"/>
</dbReference>
<dbReference type="GO" id="GO:0004814">
    <property type="term" value="F:arginine-tRNA ligase activity"/>
    <property type="evidence" value="ECO:0007669"/>
    <property type="project" value="InterPro"/>
</dbReference>
<dbReference type="GO" id="GO:0005524">
    <property type="term" value="F:ATP binding"/>
    <property type="evidence" value="ECO:0007669"/>
    <property type="project" value="UniProtKB-UniRule"/>
</dbReference>
<dbReference type="GO" id="GO:0004820">
    <property type="term" value="F:glycine-tRNA ligase activity"/>
    <property type="evidence" value="ECO:0007669"/>
    <property type="project" value="UniProtKB-UniRule"/>
</dbReference>
<dbReference type="GO" id="GO:0006420">
    <property type="term" value="P:arginyl-tRNA aminoacylation"/>
    <property type="evidence" value="ECO:0007669"/>
    <property type="project" value="InterPro"/>
</dbReference>
<dbReference type="GO" id="GO:0006426">
    <property type="term" value="P:glycyl-tRNA aminoacylation"/>
    <property type="evidence" value="ECO:0007669"/>
    <property type="project" value="UniProtKB-UniRule"/>
</dbReference>
<dbReference type="HAMAP" id="MF_00255">
    <property type="entry name" value="Gly_tRNA_synth_beta"/>
    <property type="match status" value="1"/>
</dbReference>
<dbReference type="InterPro" id="IPR008909">
    <property type="entry name" value="DALR_anticod-bd"/>
</dbReference>
<dbReference type="InterPro" id="IPR015944">
    <property type="entry name" value="Gly-tRNA-synth_bsu"/>
</dbReference>
<dbReference type="InterPro" id="IPR006194">
    <property type="entry name" value="Gly-tRNA-synth_heterodimer"/>
</dbReference>
<dbReference type="NCBIfam" id="TIGR00211">
    <property type="entry name" value="glyS"/>
    <property type="match status" value="1"/>
</dbReference>
<dbReference type="PANTHER" id="PTHR30075:SF2">
    <property type="entry name" value="GLYCINE--TRNA LIGASE, CHLOROPLASTIC_MITOCHONDRIAL 2"/>
    <property type="match status" value="1"/>
</dbReference>
<dbReference type="PANTHER" id="PTHR30075">
    <property type="entry name" value="GLYCYL-TRNA SYNTHETASE"/>
    <property type="match status" value="1"/>
</dbReference>
<dbReference type="Pfam" id="PF05746">
    <property type="entry name" value="DALR_1"/>
    <property type="match status" value="1"/>
</dbReference>
<dbReference type="Pfam" id="PF02092">
    <property type="entry name" value="tRNA_synt_2f"/>
    <property type="match status" value="1"/>
</dbReference>
<dbReference type="PRINTS" id="PR01045">
    <property type="entry name" value="TRNASYNTHGB"/>
</dbReference>
<dbReference type="SUPFAM" id="SSF109604">
    <property type="entry name" value="HD-domain/PDEase-like"/>
    <property type="match status" value="1"/>
</dbReference>
<dbReference type="PROSITE" id="PS50861">
    <property type="entry name" value="AA_TRNA_LIGASE_II_GLYAB"/>
    <property type="match status" value="1"/>
</dbReference>
<proteinExistence type="inferred from homology"/>
<sequence>MTKNLLVELGLEEIPAYIVTPAMHQLRDRMATFLTDNRLAFDSIDVFSTPRRLAVRVRGLADQQTDLTEDFKGPAKKIALDADGNFTKAAEGFVRGKGLTTADIEFREIKGEEYVYVTKHEAGQPAKTVLAGIPEVLKAMTFPVSMNWASNKFAYIRPVHTLTVLLDDEALDMDFLDITSGRISRGHRFLGNETEIASADSYEADLRAQFVITDPAERQNMIVEQIKAIEDKHNVTVEIDEDLLNEVLNLVEYPTAFMGSFDTKYLEVPEEVLVTSMKNHQRYFVVRDKAGKLLPNFISVRNGNDQYLDNVIKGNEKVLVARLEDGEFFWREDQKLKIADLVERLKVVTFHEKIGSLYEHMERTKVIAEKLADLAGLSAGEKADVARAADIYKFDLLTGMVGEFDELQGIMGEKYALLAGEKPAVAAAIREHYLPNSAEGELPESKVGAVLALADKFDTLLSFFSVGLIPSGSNDPYALRRATQGIVRILEAFGWEIPLDQLIAELYSLNFASLTYDNQPAVMDFIRARVEKMMDKTIPKDIREAVLASSTFVVRLQLAASSAIFQKAKEADYKEAVENLSRVFNLAEKAEVTAIDEALFENDQEKALAAAVAGLELTEDMAGNLDKLFALSPVIAAFFDNTMVMVDDATVKANRLALLKALADKASAVAVFNLLNSK</sequence>
<gene>
    <name evidence="1" type="primary">glyS</name>
    <name type="ordered locus">SSU98_1775</name>
</gene>
<organism>
    <name type="scientific">Streptococcus suis (strain 98HAH33)</name>
    <dbReference type="NCBI Taxonomy" id="391296"/>
    <lineage>
        <taxon>Bacteria</taxon>
        <taxon>Bacillati</taxon>
        <taxon>Bacillota</taxon>
        <taxon>Bacilli</taxon>
        <taxon>Lactobacillales</taxon>
        <taxon>Streptococcaceae</taxon>
        <taxon>Streptococcus</taxon>
    </lineage>
</organism>
<comment type="catalytic activity">
    <reaction evidence="1">
        <text>tRNA(Gly) + glycine + ATP = glycyl-tRNA(Gly) + AMP + diphosphate</text>
        <dbReference type="Rhea" id="RHEA:16013"/>
        <dbReference type="Rhea" id="RHEA-COMP:9664"/>
        <dbReference type="Rhea" id="RHEA-COMP:9683"/>
        <dbReference type="ChEBI" id="CHEBI:30616"/>
        <dbReference type="ChEBI" id="CHEBI:33019"/>
        <dbReference type="ChEBI" id="CHEBI:57305"/>
        <dbReference type="ChEBI" id="CHEBI:78442"/>
        <dbReference type="ChEBI" id="CHEBI:78522"/>
        <dbReference type="ChEBI" id="CHEBI:456215"/>
        <dbReference type="EC" id="6.1.1.14"/>
    </reaction>
</comment>
<comment type="subunit">
    <text evidence="1">Tetramer of two alpha and two beta subunits.</text>
</comment>
<comment type="subcellular location">
    <subcellularLocation>
        <location evidence="1">Cytoplasm</location>
    </subcellularLocation>
</comment>
<comment type="similarity">
    <text evidence="1">Belongs to the class-II aminoacyl-tRNA synthetase family.</text>
</comment>
<feature type="chain" id="PRO_1000101358" description="Glycine--tRNA ligase beta subunit">
    <location>
        <begin position="1"/>
        <end position="678"/>
    </location>
</feature>
<evidence type="ECO:0000255" key="1">
    <source>
        <dbReference type="HAMAP-Rule" id="MF_00255"/>
    </source>
</evidence>
<name>SYGB_STRS2</name>
<protein>
    <recommendedName>
        <fullName evidence="1">Glycine--tRNA ligase beta subunit</fullName>
        <ecNumber evidence="1">6.1.1.14</ecNumber>
    </recommendedName>
    <alternativeName>
        <fullName evidence="1">Glycyl-tRNA synthetase beta subunit</fullName>
        <shortName evidence="1">GlyRS</shortName>
    </alternativeName>
</protein>
<keyword id="KW-0030">Aminoacyl-tRNA synthetase</keyword>
<keyword id="KW-0067">ATP-binding</keyword>
<keyword id="KW-0963">Cytoplasm</keyword>
<keyword id="KW-0436">Ligase</keyword>
<keyword id="KW-0547">Nucleotide-binding</keyword>
<keyword id="KW-0648">Protein biosynthesis</keyword>
<reference key="1">
    <citation type="journal article" date="2007" name="PLoS ONE">
        <title>A glimpse of streptococcal toxic shock syndrome from comparative genomics of S. suis 2 Chinese isolates.</title>
        <authorList>
            <person name="Chen C."/>
            <person name="Tang J."/>
            <person name="Dong W."/>
            <person name="Wang C."/>
            <person name="Feng Y."/>
            <person name="Wang J."/>
            <person name="Zheng F."/>
            <person name="Pan X."/>
            <person name="Liu D."/>
            <person name="Li M."/>
            <person name="Song Y."/>
            <person name="Zhu X."/>
            <person name="Sun H."/>
            <person name="Feng T."/>
            <person name="Guo Z."/>
            <person name="Ju A."/>
            <person name="Ge J."/>
            <person name="Dong Y."/>
            <person name="Sun W."/>
            <person name="Jiang Y."/>
            <person name="Wang J."/>
            <person name="Yan J."/>
            <person name="Yang H."/>
            <person name="Wang X."/>
            <person name="Gao G.F."/>
            <person name="Yang R."/>
            <person name="Wang J."/>
            <person name="Yu J."/>
        </authorList>
    </citation>
    <scope>NUCLEOTIDE SEQUENCE [LARGE SCALE GENOMIC DNA]</scope>
    <source>
        <strain>98HAH33</strain>
    </source>
</reference>
<accession>A4W3J4</accession>